<dbReference type="EMBL" id="CH471059">
    <property type="protein sequence ID" value="EAX07108.1"/>
    <property type="molecule type" value="Genomic_DNA"/>
</dbReference>
<dbReference type="EMBL" id="CH471059">
    <property type="protein sequence ID" value="EAX07109.1"/>
    <property type="molecule type" value="Genomic_DNA"/>
</dbReference>
<dbReference type="EMBL" id="BC041633">
    <property type="protein sequence ID" value="AAH41633.1"/>
    <property type="molecule type" value="mRNA"/>
</dbReference>
<dbReference type="CCDS" id="CCDS481.1"/>
<dbReference type="RefSeq" id="NP_001158301.1">
    <property type="nucleotide sequence ID" value="NM_001164829.2"/>
</dbReference>
<dbReference type="RefSeq" id="NP_872323.1">
    <property type="nucleotide sequence ID" value="NM_182517.3"/>
</dbReference>
<dbReference type="RefSeq" id="XP_011539104.1">
    <property type="nucleotide sequence ID" value="XM_011540802.3"/>
</dbReference>
<dbReference type="RefSeq" id="XP_054190634.1">
    <property type="nucleotide sequence ID" value="XM_054334659.1"/>
</dbReference>
<dbReference type="SMR" id="Q8IVY1"/>
<dbReference type="BioGRID" id="127215">
    <property type="interactions" value="31"/>
</dbReference>
<dbReference type="FunCoup" id="Q8IVY1">
    <property type="interactions" value="16"/>
</dbReference>
<dbReference type="IntAct" id="Q8IVY1">
    <property type="interactions" value="30"/>
</dbReference>
<dbReference type="STRING" id="9606.ENSP00000430918"/>
<dbReference type="GlyCosmos" id="Q8IVY1">
    <property type="glycosylation" value="3 sites, 2 glycans"/>
</dbReference>
<dbReference type="GlyGen" id="Q8IVY1">
    <property type="glycosylation" value="3 sites, 2 O-linked glycans (2 sites)"/>
</dbReference>
<dbReference type="iPTMnet" id="Q8IVY1"/>
<dbReference type="PhosphoSitePlus" id="Q8IVY1"/>
<dbReference type="SwissPalm" id="Q8IVY1"/>
<dbReference type="BioMuta" id="C1orf210"/>
<dbReference type="DMDM" id="74728100"/>
<dbReference type="jPOST" id="Q8IVY1"/>
<dbReference type="MassIVE" id="Q8IVY1"/>
<dbReference type="PaxDb" id="9606-ENSP00000430918"/>
<dbReference type="PeptideAtlas" id="Q8IVY1"/>
<dbReference type="ProteomicsDB" id="70791"/>
<dbReference type="Antibodypedia" id="52415">
    <property type="antibodies" value="42 antibodies from 11 providers"/>
</dbReference>
<dbReference type="DNASU" id="149466"/>
<dbReference type="Ensembl" id="ENST00000423420.1">
    <property type="protein sequence ID" value="ENSP00000429399.1"/>
    <property type="gene ID" value="ENSG00000253313.6"/>
</dbReference>
<dbReference type="Ensembl" id="ENST00000523677.6">
    <property type="protein sequence ID" value="ENSP00000430918.1"/>
    <property type="gene ID" value="ENSG00000253313.6"/>
</dbReference>
<dbReference type="GeneID" id="149466"/>
<dbReference type="KEGG" id="hsa:149466"/>
<dbReference type="MANE-Select" id="ENST00000523677.6">
    <property type="protein sequence ID" value="ENSP00000430918.1"/>
    <property type="RefSeq nucleotide sequence ID" value="NM_182517.3"/>
    <property type="RefSeq protein sequence ID" value="NP_872323.1"/>
</dbReference>
<dbReference type="UCSC" id="uc001cit.5">
    <property type="organism name" value="human"/>
</dbReference>
<dbReference type="AGR" id="HGNC:28755"/>
<dbReference type="CTD" id="149466"/>
<dbReference type="DisGeNET" id="149466"/>
<dbReference type="GeneCards" id="C1orf210"/>
<dbReference type="HGNC" id="HGNC:28755">
    <property type="gene designation" value="C1orf210"/>
</dbReference>
<dbReference type="HPA" id="ENSG00000253313">
    <property type="expression patterns" value="Tissue enhanced (intestine)"/>
</dbReference>
<dbReference type="MIM" id="620582">
    <property type="type" value="gene"/>
</dbReference>
<dbReference type="neXtProt" id="NX_Q8IVY1"/>
<dbReference type="OpenTargets" id="ENSG00000253313"/>
<dbReference type="PharmGKB" id="PA144596510"/>
<dbReference type="VEuPathDB" id="HostDB:ENSG00000253313"/>
<dbReference type="eggNOG" id="ENOG502S614">
    <property type="taxonomic scope" value="Eukaryota"/>
</dbReference>
<dbReference type="GeneTree" id="ENSGT00510000048988"/>
<dbReference type="HOGENOM" id="CLU_2157591_0_0_1"/>
<dbReference type="InParanoid" id="Q8IVY1"/>
<dbReference type="OMA" id="EANHTYT"/>
<dbReference type="OrthoDB" id="676979at2759"/>
<dbReference type="PAN-GO" id="Q8IVY1">
    <property type="GO annotations" value="0 GO annotations based on evolutionary models"/>
</dbReference>
<dbReference type="PhylomeDB" id="Q8IVY1"/>
<dbReference type="TreeFam" id="TF338695"/>
<dbReference type="PathwayCommons" id="Q8IVY1"/>
<dbReference type="BioGRID-ORCS" id="149466">
    <property type="hits" value="16 hits in 1135 CRISPR screens"/>
</dbReference>
<dbReference type="ChiTaRS" id="C1orf210">
    <property type="organism name" value="human"/>
</dbReference>
<dbReference type="GenomeRNAi" id="149466"/>
<dbReference type="Pharos" id="Q8IVY1">
    <property type="development level" value="Tdark"/>
</dbReference>
<dbReference type="PRO" id="PR:Q8IVY1"/>
<dbReference type="Proteomes" id="UP000005640">
    <property type="component" value="Chromosome 1"/>
</dbReference>
<dbReference type="RNAct" id="Q8IVY1">
    <property type="molecule type" value="protein"/>
</dbReference>
<dbReference type="Bgee" id="ENSG00000253313">
    <property type="expression patterns" value="Expressed in oocyte and 112 other cell types or tissues"/>
</dbReference>
<dbReference type="GO" id="GO:0005769">
    <property type="term" value="C:early endosome"/>
    <property type="evidence" value="ECO:0007669"/>
    <property type="project" value="UniProtKB-SubCell"/>
</dbReference>
<dbReference type="GO" id="GO:0005886">
    <property type="term" value="C:plasma membrane"/>
    <property type="evidence" value="ECO:0007669"/>
    <property type="project" value="UniProtKB-SubCell"/>
</dbReference>
<dbReference type="GO" id="GO:0055037">
    <property type="term" value="C:recycling endosome"/>
    <property type="evidence" value="ECO:0007669"/>
    <property type="project" value="UniProtKB-SubCell"/>
</dbReference>
<dbReference type="PANTHER" id="PTHR31450">
    <property type="entry name" value="LEUCINE-RICH REPEAT-CONTAINING PROTEIN 19 LRRC19 FAMILY MEMBER"/>
    <property type="match status" value="1"/>
</dbReference>
<dbReference type="PANTHER" id="PTHR31450:SF3">
    <property type="entry name" value="TYPE III ENDOSOME MEMBRANE PROTEIN TEMP"/>
    <property type="match status" value="1"/>
</dbReference>
<evidence type="ECO:0000250" key="1">
    <source>
        <dbReference type="UniProtKB" id="Q9CQM1"/>
    </source>
</evidence>
<evidence type="ECO:0000255" key="2"/>
<evidence type="ECO:0000256" key="3">
    <source>
        <dbReference type="SAM" id="MobiDB-lite"/>
    </source>
</evidence>
<evidence type="ECO:0000305" key="4"/>
<reference key="1">
    <citation type="submission" date="2005-09" db="EMBL/GenBank/DDBJ databases">
        <authorList>
            <person name="Mural R.J."/>
            <person name="Istrail S."/>
            <person name="Sutton G.G."/>
            <person name="Florea L."/>
            <person name="Halpern A.L."/>
            <person name="Mobarry C.M."/>
            <person name="Lippert R."/>
            <person name="Walenz B."/>
            <person name="Shatkay H."/>
            <person name="Dew I."/>
            <person name="Miller J.R."/>
            <person name="Flanigan M.J."/>
            <person name="Edwards N.J."/>
            <person name="Bolanos R."/>
            <person name="Fasulo D."/>
            <person name="Halldorsson B.V."/>
            <person name="Hannenhalli S."/>
            <person name="Turner R."/>
            <person name="Yooseph S."/>
            <person name="Lu F."/>
            <person name="Nusskern D.R."/>
            <person name="Shue B.C."/>
            <person name="Zheng X.H."/>
            <person name="Zhong F."/>
            <person name="Delcher A.L."/>
            <person name="Huson D.H."/>
            <person name="Kravitz S.A."/>
            <person name="Mouchard L."/>
            <person name="Reinert K."/>
            <person name="Remington K.A."/>
            <person name="Clark A.G."/>
            <person name="Waterman M.S."/>
            <person name="Eichler E.E."/>
            <person name="Adams M.D."/>
            <person name="Hunkapiller M.W."/>
            <person name="Myers E.W."/>
            <person name="Venter J.C."/>
        </authorList>
    </citation>
    <scope>NUCLEOTIDE SEQUENCE [LARGE SCALE GENOMIC DNA]</scope>
</reference>
<reference key="2">
    <citation type="journal article" date="2004" name="Genome Res.">
        <title>The status, quality, and expansion of the NIH full-length cDNA project: the Mammalian Gene Collection (MGC).</title>
        <authorList>
            <consortium name="The MGC Project Team"/>
        </authorList>
    </citation>
    <scope>NUCLEOTIDE SEQUENCE [LARGE SCALE MRNA]</scope>
    <source>
        <tissue>Colon</tissue>
    </source>
</reference>
<name>CA210_HUMAN</name>
<proteinExistence type="evidence at protein level"/>
<comment type="function">
    <text>May be involved in membrane trafficking between endosomes and plasma membrane.</text>
</comment>
<comment type="subcellular location">
    <subcellularLocation>
        <location evidence="4">Membrane</location>
        <topology evidence="4">Single-pass type III membrane protein</topology>
    </subcellularLocation>
    <subcellularLocation>
        <location evidence="1">Early endosome</location>
    </subcellularLocation>
    <subcellularLocation>
        <location evidence="1">Recycling endosome</location>
    </subcellularLocation>
    <subcellularLocation>
        <location evidence="1">Cell membrane</location>
    </subcellularLocation>
    <text evidence="1">Also localizes to tubular endosome structures.</text>
</comment>
<protein>
    <recommendedName>
        <fullName evidence="1">Type III endosome membrane protein TEMP</fullName>
        <shortName evidence="1">TEMP</shortName>
    </recommendedName>
</protein>
<feature type="chain" id="PRO_0000271010" description="Type III endosome membrane protein TEMP">
    <location>
        <begin position="1"/>
        <end position="113"/>
    </location>
</feature>
<feature type="topological domain" description="Extracellular" evidence="1">
    <location>
        <begin position="1"/>
        <end position="29"/>
    </location>
</feature>
<feature type="transmembrane region" description="Helical; Signal-anchor for type III membrane protein" evidence="2">
    <location>
        <begin position="30"/>
        <end position="50"/>
    </location>
</feature>
<feature type="topological domain" description="Cytoplasmic" evidence="2">
    <location>
        <begin position="51"/>
        <end position="113"/>
    </location>
</feature>
<feature type="region of interest" description="Disordered" evidence="3">
    <location>
        <begin position="1"/>
        <end position="22"/>
    </location>
</feature>
<feature type="region of interest" description="Disordered" evidence="3">
    <location>
        <begin position="66"/>
        <end position="113"/>
    </location>
</feature>
<feature type="compositionally biased region" description="Acidic residues" evidence="3">
    <location>
        <begin position="81"/>
        <end position="90"/>
    </location>
</feature>
<feature type="glycosylation site" description="N-linked (GlcNAc...) asparagine" evidence="2">
    <location>
        <position position="5"/>
    </location>
</feature>
<feature type="sequence variant" id="VAR_033655" description="In dbSNP:rs35465732.">
    <original>S</original>
    <variation>L</variation>
    <location>
        <position position="12"/>
    </location>
</feature>
<sequence length="113" mass="12024">MNETNKTLVGPSELPTASAVAPGPGTGARAWPVLVGFVLGAVVLSLLIALAAKCHLCRRYHASYRHRPLPETGRGGRPQVAEDEDDDGFIEDNYIQPGTGELGTEGSRDHFSL</sequence>
<accession>Q8IVY1</accession>
<accession>D3DPX2</accession>
<keyword id="KW-1003">Cell membrane</keyword>
<keyword id="KW-0967">Endosome</keyword>
<keyword id="KW-0325">Glycoprotein</keyword>
<keyword id="KW-0472">Membrane</keyword>
<keyword id="KW-1267">Proteomics identification</keyword>
<keyword id="KW-1185">Reference proteome</keyword>
<keyword id="KW-0735">Signal-anchor</keyword>
<keyword id="KW-0812">Transmembrane</keyword>
<keyword id="KW-1133">Transmembrane helix</keyword>
<organism>
    <name type="scientific">Homo sapiens</name>
    <name type="common">Human</name>
    <dbReference type="NCBI Taxonomy" id="9606"/>
    <lineage>
        <taxon>Eukaryota</taxon>
        <taxon>Metazoa</taxon>
        <taxon>Chordata</taxon>
        <taxon>Craniata</taxon>
        <taxon>Vertebrata</taxon>
        <taxon>Euteleostomi</taxon>
        <taxon>Mammalia</taxon>
        <taxon>Eutheria</taxon>
        <taxon>Euarchontoglires</taxon>
        <taxon>Primates</taxon>
        <taxon>Haplorrhini</taxon>
        <taxon>Catarrhini</taxon>
        <taxon>Hominidae</taxon>
        <taxon>Homo</taxon>
    </lineage>
</organism>
<gene>
    <name type="primary">C1orf210</name>
</gene>